<protein>
    <recommendedName>
        <fullName>Transmembrane protein 247</fullName>
    </recommendedName>
</protein>
<organism>
    <name type="scientific">Mus musculus</name>
    <name type="common">Mouse</name>
    <dbReference type="NCBI Taxonomy" id="10090"/>
    <lineage>
        <taxon>Eukaryota</taxon>
        <taxon>Metazoa</taxon>
        <taxon>Chordata</taxon>
        <taxon>Craniata</taxon>
        <taxon>Vertebrata</taxon>
        <taxon>Euteleostomi</taxon>
        <taxon>Mammalia</taxon>
        <taxon>Eutheria</taxon>
        <taxon>Euarchontoglires</taxon>
        <taxon>Glires</taxon>
        <taxon>Rodentia</taxon>
        <taxon>Myomorpha</taxon>
        <taxon>Muroidea</taxon>
        <taxon>Muridae</taxon>
        <taxon>Murinae</taxon>
        <taxon>Mus</taxon>
        <taxon>Mus</taxon>
    </lineage>
</organism>
<reference key="1">
    <citation type="journal article" date="2005" name="Science">
        <title>The transcriptional landscape of the mammalian genome.</title>
        <authorList>
            <person name="Carninci P."/>
            <person name="Kasukawa T."/>
            <person name="Katayama S."/>
            <person name="Gough J."/>
            <person name="Frith M.C."/>
            <person name="Maeda N."/>
            <person name="Oyama R."/>
            <person name="Ravasi T."/>
            <person name="Lenhard B."/>
            <person name="Wells C."/>
            <person name="Kodzius R."/>
            <person name="Shimokawa K."/>
            <person name="Bajic V.B."/>
            <person name="Brenner S.E."/>
            <person name="Batalov S."/>
            <person name="Forrest A.R."/>
            <person name="Zavolan M."/>
            <person name="Davis M.J."/>
            <person name="Wilming L.G."/>
            <person name="Aidinis V."/>
            <person name="Allen J.E."/>
            <person name="Ambesi-Impiombato A."/>
            <person name="Apweiler R."/>
            <person name="Aturaliya R.N."/>
            <person name="Bailey T.L."/>
            <person name="Bansal M."/>
            <person name="Baxter L."/>
            <person name="Beisel K.W."/>
            <person name="Bersano T."/>
            <person name="Bono H."/>
            <person name="Chalk A.M."/>
            <person name="Chiu K.P."/>
            <person name="Choudhary V."/>
            <person name="Christoffels A."/>
            <person name="Clutterbuck D.R."/>
            <person name="Crowe M.L."/>
            <person name="Dalla E."/>
            <person name="Dalrymple B.P."/>
            <person name="de Bono B."/>
            <person name="Della Gatta G."/>
            <person name="di Bernardo D."/>
            <person name="Down T."/>
            <person name="Engstrom P."/>
            <person name="Fagiolini M."/>
            <person name="Faulkner G."/>
            <person name="Fletcher C.F."/>
            <person name="Fukushima T."/>
            <person name="Furuno M."/>
            <person name="Futaki S."/>
            <person name="Gariboldi M."/>
            <person name="Georgii-Hemming P."/>
            <person name="Gingeras T.R."/>
            <person name="Gojobori T."/>
            <person name="Green R.E."/>
            <person name="Gustincich S."/>
            <person name="Harbers M."/>
            <person name="Hayashi Y."/>
            <person name="Hensch T.K."/>
            <person name="Hirokawa N."/>
            <person name="Hill D."/>
            <person name="Huminiecki L."/>
            <person name="Iacono M."/>
            <person name="Ikeo K."/>
            <person name="Iwama A."/>
            <person name="Ishikawa T."/>
            <person name="Jakt M."/>
            <person name="Kanapin A."/>
            <person name="Katoh M."/>
            <person name="Kawasawa Y."/>
            <person name="Kelso J."/>
            <person name="Kitamura H."/>
            <person name="Kitano H."/>
            <person name="Kollias G."/>
            <person name="Krishnan S.P."/>
            <person name="Kruger A."/>
            <person name="Kummerfeld S.K."/>
            <person name="Kurochkin I.V."/>
            <person name="Lareau L.F."/>
            <person name="Lazarevic D."/>
            <person name="Lipovich L."/>
            <person name="Liu J."/>
            <person name="Liuni S."/>
            <person name="McWilliam S."/>
            <person name="Madan Babu M."/>
            <person name="Madera M."/>
            <person name="Marchionni L."/>
            <person name="Matsuda H."/>
            <person name="Matsuzawa S."/>
            <person name="Miki H."/>
            <person name="Mignone F."/>
            <person name="Miyake S."/>
            <person name="Morris K."/>
            <person name="Mottagui-Tabar S."/>
            <person name="Mulder N."/>
            <person name="Nakano N."/>
            <person name="Nakauchi H."/>
            <person name="Ng P."/>
            <person name="Nilsson R."/>
            <person name="Nishiguchi S."/>
            <person name="Nishikawa S."/>
            <person name="Nori F."/>
            <person name="Ohara O."/>
            <person name="Okazaki Y."/>
            <person name="Orlando V."/>
            <person name="Pang K.C."/>
            <person name="Pavan W.J."/>
            <person name="Pavesi G."/>
            <person name="Pesole G."/>
            <person name="Petrovsky N."/>
            <person name="Piazza S."/>
            <person name="Reed J."/>
            <person name="Reid J.F."/>
            <person name="Ring B.Z."/>
            <person name="Ringwald M."/>
            <person name="Rost B."/>
            <person name="Ruan Y."/>
            <person name="Salzberg S.L."/>
            <person name="Sandelin A."/>
            <person name="Schneider C."/>
            <person name="Schoenbach C."/>
            <person name="Sekiguchi K."/>
            <person name="Semple C.A."/>
            <person name="Seno S."/>
            <person name="Sessa L."/>
            <person name="Sheng Y."/>
            <person name="Shibata Y."/>
            <person name="Shimada H."/>
            <person name="Shimada K."/>
            <person name="Silva D."/>
            <person name="Sinclair B."/>
            <person name="Sperling S."/>
            <person name="Stupka E."/>
            <person name="Sugiura K."/>
            <person name="Sultana R."/>
            <person name="Takenaka Y."/>
            <person name="Taki K."/>
            <person name="Tammoja K."/>
            <person name="Tan S.L."/>
            <person name="Tang S."/>
            <person name="Taylor M.S."/>
            <person name="Tegner J."/>
            <person name="Teichmann S.A."/>
            <person name="Ueda H.R."/>
            <person name="van Nimwegen E."/>
            <person name="Verardo R."/>
            <person name="Wei C.L."/>
            <person name="Yagi K."/>
            <person name="Yamanishi H."/>
            <person name="Zabarovsky E."/>
            <person name="Zhu S."/>
            <person name="Zimmer A."/>
            <person name="Hide W."/>
            <person name="Bult C."/>
            <person name="Grimmond S.M."/>
            <person name="Teasdale R.D."/>
            <person name="Liu E.T."/>
            <person name="Brusic V."/>
            <person name="Quackenbush J."/>
            <person name="Wahlestedt C."/>
            <person name="Mattick J.S."/>
            <person name="Hume D.A."/>
            <person name="Kai C."/>
            <person name="Sasaki D."/>
            <person name="Tomaru Y."/>
            <person name="Fukuda S."/>
            <person name="Kanamori-Katayama M."/>
            <person name="Suzuki M."/>
            <person name="Aoki J."/>
            <person name="Arakawa T."/>
            <person name="Iida J."/>
            <person name="Imamura K."/>
            <person name="Itoh M."/>
            <person name="Kato T."/>
            <person name="Kawaji H."/>
            <person name="Kawagashira N."/>
            <person name="Kawashima T."/>
            <person name="Kojima M."/>
            <person name="Kondo S."/>
            <person name="Konno H."/>
            <person name="Nakano K."/>
            <person name="Ninomiya N."/>
            <person name="Nishio T."/>
            <person name="Okada M."/>
            <person name="Plessy C."/>
            <person name="Shibata K."/>
            <person name="Shiraki T."/>
            <person name="Suzuki S."/>
            <person name="Tagami M."/>
            <person name="Waki K."/>
            <person name="Watahiki A."/>
            <person name="Okamura-Oho Y."/>
            <person name="Suzuki H."/>
            <person name="Kawai J."/>
            <person name="Hayashizaki Y."/>
        </authorList>
    </citation>
    <scope>NUCLEOTIDE SEQUENCE [LARGE SCALE MRNA]</scope>
    <source>
        <strain>C57BL/6J</strain>
        <tissue>Testis</tissue>
    </source>
</reference>
<reference key="2">
    <citation type="journal article" date="2004" name="Genome Res.">
        <title>The status, quality, and expansion of the NIH full-length cDNA project: the Mammalian Gene Collection (MGC).</title>
        <authorList>
            <consortium name="The MGC Project Team"/>
        </authorList>
    </citation>
    <scope>NUCLEOTIDE SEQUENCE [LARGE SCALE MRNA]</scope>
    <source>
        <tissue>Testis</tissue>
    </source>
</reference>
<reference key="3">
    <citation type="journal article" date="2010" name="Cell">
        <title>A tissue-specific atlas of mouse protein phosphorylation and expression.</title>
        <authorList>
            <person name="Huttlin E.L."/>
            <person name="Jedrychowski M.P."/>
            <person name="Elias J.E."/>
            <person name="Goswami T."/>
            <person name="Rad R."/>
            <person name="Beausoleil S.A."/>
            <person name="Villen J."/>
            <person name="Haas W."/>
            <person name="Sowa M.E."/>
            <person name="Gygi S.P."/>
        </authorList>
    </citation>
    <scope>IDENTIFICATION BY MASS SPECTROMETRY [LARGE SCALE ANALYSIS]</scope>
    <source>
        <tissue>Testis</tissue>
    </source>
</reference>
<accession>Q497K7</accession>
<accession>Q8BVQ7</accession>
<accession>Q9CU05</accession>
<sequence length="211" mass="23971">MAMEDREVMEARGAGESCPTLSKVAPVDSMPEGKPKASLDAEVPKLELPTLEENGICEDRDCPGPPRSLPPKSGPNAKGQAGDGPGLESVELPLPLETEHRNAMELEKVRMEFELTLLKYLHQENERQRQHEEVMEQLQQQQQQQQALPHQFSGSLQDLLLPQNQFAMFFYCFIFIHIIYVAKETVFFLFSKHYLFCLAAILLCLIKTLWS</sequence>
<keyword id="KW-0175">Coiled coil</keyword>
<keyword id="KW-0472">Membrane</keyword>
<keyword id="KW-1185">Reference proteome</keyword>
<keyword id="KW-0812">Transmembrane</keyword>
<keyword id="KW-1133">Transmembrane helix</keyword>
<proteinExistence type="evidence at protein level"/>
<dbReference type="EMBL" id="AK018916">
    <property type="protein sequence ID" value="BAB31481.1"/>
    <property type="molecule type" value="mRNA"/>
</dbReference>
<dbReference type="EMBL" id="AK076910">
    <property type="protein sequence ID" value="BAC36525.1"/>
    <property type="molecule type" value="mRNA"/>
</dbReference>
<dbReference type="EMBL" id="BC100486">
    <property type="protein sequence ID" value="AAI00487.1"/>
    <property type="status" value="ALT_INIT"/>
    <property type="molecule type" value="mRNA"/>
</dbReference>
<dbReference type="CCDS" id="CCDS79579.1"/>
<dbReference type="RefSeq" id="NP_001264909.1">
    <property type="nucleotide sequence ID" value="NM_001277980.1"/>
</dbReference>
<dbReference type="RefSeq" id="NP_084380.1">
    <property type="nucleotide sequence ID" value="NM_030104.1"/>
</dbReference>
<dbReference type="SMR" id="Q497K7"/>
<dbReference type="FunCoup" id="Q497K7">
    <property type="interactions" value="91"/>
</dbReference>
<dbReference type="STRING" id="10090.ENSMUSP00000039338"/>
<dbReference type="iPTMnet" id="Q497K7"/>
<dbReference type="PhosphoSitePlus" id="Q497K7"/>
<dbReference type="SwissPalm" id="Q497K7"/>
<dbReference type="PaxDb" id="10090-ENSMUSP00000039338"/>
<dbReference type="ProteomicsDB" id="262826"/>
<dbReference type="Antibodypedia" id="82417">
    <property type="antibodies" value="2 antibodies from 2 providers"/>
</dbReference>
<dbReference type="Ensembl" id="ENSMUST00000042172.7">
    <property type="protein sequence ID" value="ENSMUSP00000039338.6"/>
    <property type="gene ID" value="ENSMUSG00000037689.7"/>
</dbReference>
<dbReference type="GeneID" id="78469"/>
<dbReference type="KEGG" id="mmu:78469"/>
<dbReference type="UCSC" id="uc008duk.2">
    <property type="organism name" value="mouse"/>
</dbReference>
<dbReference type="AGR" id="MGI:1925719"/>
<dbReference type="CTD" id="388946"/>
<dbReference type="MGI" id="MGI:1925719">
    <property type="gene designation" value="Tmem247"/>
</dbReference>
<dbReference type="VEuPathDB" id="HostDB:ENSMUSG00000037689"/>
<dbReference type="eggNOG" id="ENOG502SRZ8">
    <property type="taxonomic scope" value="Eukaryota"/>
</dbReference>
<dbReference type="GeneTree" id="ENSGT00390000002879"/>
<dbReference type="HOGENOM" id="CLU_112717_0_0_1"/>
<dbReference type="InParanoid" id="Q497K7"/>
<dbReference type="OMA" id="DPMSEGK"/>
<dbReference type="OrthoDB" id="9427125at2759"/>
<dbReference type="PhylomeDB" id="Q497K7"/>
<dbReference type="TreeFam" id="TF337834"/>
<dbReference type="BioGRID-ORCS" id="78469">
    <property type="hits" value="1 hit in 70 CRISPR screens"/>
</dbReference>
<dbReference type="PRO" id="PR:Q497K7"/>
<dbReference type="Proteomes" id="UP000000589">
    <property type="component" value="Chromosome 17"/>
</dbReference>
<dbReference type="RNAct" id="Q497K7">
    <property type="molecule type" value="protein"/>
</dbReference>
<dbReference type="Bgee" id="ENSMUSG00000037689">
    <property type="expression patterns" value="Expressed in seminiferous tubule of testis and 7 other cell types or tissues"/>
</dbReference>
<dbReference type="ExpressionAtlas" id="Q497K7">
    <property type="expression patterns" value="baseline and differential"/>
</dbReference>
<dbReference type="GO" id="GO:0005783">
    <property type="term" value="C:endoplasmic reticulum"/>
    <property type="evidence" value="ECO:0000314"/>
    <property type="project" value="MGI"/>
</dbReference>
<dbReference type="GO" id="GO:0016020">
    <property type="term" value="C:membrane"/>
    <property type="evidence" value="ECO:0007669"/>
    <property type="project" value="UniProtKB-SubCell"/>
</dbReference>
<dbReference type="InterPro" id="IPR029200">
    <property type="entry name" value="TMEM247"/>
</dbReference>
<dbReference type="PANTHER" id="PTHR36691">
    <property type="entry name" value="TRANSMEMBRANE PROTEIN 247"/>
    <property type="match status" value="1"/>
</dbReference>
<dbReference type="PANTHER" id="PTHR36691:SF1">
    <property type="entry name" value="TRANSMEMBRANE PROTEIN 247"/>
    <property type="match status" value="1"/>
</dbReference>
<dbReference type="Pfam" id="PF15444">
    <property type="entry name" value="TMEM247"/>
    <property type="match status" value="1"/>
</dbReference>
<name>TM247_MOUSE</name>
<gene>
    <name type="primary">Tmem247</name>
</gene>
<evidence type="ECO:0000255" key="1"/>
<evidence type="ECO:0000256" key="2">
    <source>
        <dbReference type="SAM" id="MobiDB-lite"/>
    </source>
</evidence>
<evidence type="ECO:0000305" key="3"/>
<comment type="subcellular location">
    <subcellularLocation>
        <location evidence="3">Membrane</location>
        <topology evidence="3">Multi-pass membrane protein</topology>
    </subcellularLocation>
</comment>
<comment type="sequence caution" evidence="3">
    <conflict type="erroneous initiation">
        <sequence resource="EMBL-CDS" id="AAI00487"/>
    </conflict>
    <text>Extended N-terminus.</text>
</comment>
<feature type="chain" id="PRO_0000328814" description="Transmembrane protein 247">
    <location>
        <begin position="1"/>
        <end position="211"/>
    </location>
</feature>
<feature type="transmembrane region" description="Helical" evidence="1">
    <location>
        <begin position="159"/>
        <end position="179"/>
    </location>
</feature>
<feature type="transmembrane region" description="Helical" evidence="1">
    <location>
        <begin position="186"/>
        <end position="206"/>
    </location>
</feature>
<feature type="region of interest" description="Disordered" evidence="2">
    <location>
        <begin position="1"/>
        <end position="90"/>
    </location>
</feature>
<feature type="coiled-coil region" evidence="1">
    <location>
        <begin position="119"/>
        <end position="148"/>
    </location>
</feature>
<feature type="compositionally biased region" description="Basic and acidic residues" evidence="2">
    <location>
        <begin position="1"/>
        <end position="10"/>
    </location>
</feature>
<feature type="compositionally biased region" description="Basic and acidic residues" evidence="2">
    <location>
        <begin position="31"/>
        <end position="45"/>
    </location>
</feature>
<feature type="compositionally biased region" description="Pro residues" evidence="2">
    <location>
        <begin position="63"/>
        <end position="73"/>
    </location>
</feature>
<feature type="sequence conflict" description="In Ref. 1; BAB31481." evidence="3" ref="1">
    <original>II</original>
    <variation>MM</variation>
    <location>
        <begin position="178"/>
        <end position="179"/>
    </location>
</feature>